<reference key="1">
    <citation type="journal article" date="2004" name="Nature">
        <title>Genome sequence of the Brown Norway rat yields insights into mammalian evolution.</title>
        <authorList>
            <person name="Gibbs R.A."/>
            <person name="Weinstock G.M."/>
            <person name="Metzker M.L."/>
            <person name="Muzny D.M."/>
            <person name="Sodergren E.J."/>
            <person name="Scherer S."/>
            <person name="Scott G."/>
            <person name="Steffen D."/>
            <person name="Worley K.C."/>
            <person name="Burch P.E."/>
            <person name="Okwuonu G."/>
            <person name="Hines S."/>
            <person name="Lewis L."/>
            <person name="Deramo C."/>
            <person name="Delgado O."/>
            <person name="Dugan-Rocha S."/>
            <person name="Miner G."/>
            <person name="Morgan M."/>
            <person name="Hawes A."/>
            <person name="Gill R."/>
            <person name="Holt R.A."/>
            <person name="Adams M.D."/>
            <person name="Amanatides P.G."/>
            <person name="Baden-Tillson H."/>
            <person name="Barnstead M."/>
            <person name="Chin S."/>
            <person name="Evans C.A."/>
            <person name="Ferriera S."/>
            <person name="Fosler C."/>
            <person name="Glodek A."/>
            <person name="Gu Z."/>
            <person name="Jennings D."/>
            <person name="Kraft C.L."/>
            <person name="Nguyen T."/>
            <person name="Pfannkoch C.M."/>
            <person name="Sitter C."/>
            <person name="Sutton G.G."/>
            <person name="Venter J.C."/>
            <person name="Woodage T."/>
            <person name="Smith D."/>
            <person name="Lee H.-M."/>
            <person name="Gustafson E."/>
            <person name="Cahill P."/>
            <person name="Kana A."/>
            <person name="Doucette-Stamm L."/>
            <person name="Weinstock K."/>
            <person name="Fechtel K."/>
            <person name="Weiss R.B."/>
            <person name="Dunn D.M."/>
            <person name="Green E.D."/>
            <person name="Blakesley R.W."/>
            <person name="Bouffard G.G."/>
            <person name="De Jong P.J."/>
            <person name="Osoegawa K."/>
            <person name="Zhu B."/>
            <person name="Marra M."/>
            <person name="Schein J."/>
            <person name="Bosdet I."/>
            <person name="Fjell C."/>
            <person name="Jones S."/>
            <person name="Krzywinski M."/>
            <person name="Mathewson C."/>
            <person name="Siddiqui A."/>
            <person name="Wye N."/>
            <person name="McPherson J."/>
            <person name="Zhao S."/>
            <person name="Fraser C.M."/>
            <person name="Shetty J."/>
            <person name="Shatsman S."/>
            <person name="Geer K."/>
            <person name="Chen Y."/>
            <person name="Abramzon S."/>
            <person name="Nierman W.C."/>
            <person name="Havlak P.H."/>
            <person name="Chen R."/>
            <person name="Durbin K.J."/>
            <person name="Egan A."/>
            <person name="Ren Y."/>
            <person name="Song X.-Z."/>
            <person name="Li B."/>
            <person name="Liu Y."/>
            <person name="Qin X."/>
            <person name="Cawley S."/>
            <person name="Cooney A.J."/>
            <person name="D'Souza L.M."/>
            <person name="Martin K."/>
            <person name="Wu J.Q."/>
            <person name="Gonzalez-Garay M.L."/>
            <person name="Jackson A.R."/>
            <person name="Kalafus K.J."/>
            <person name="McLeod M.P."/>
            <person name="Milosavljevic A."/>
            <person name="Virk D."/>
            <person name="Volkov A."/>
            <person name="Wheeler D.A."/>
            <person name="Zhang Z."/>
            <person name="Bailey J.A."/>
            <person name="Eichler E.E."/>
            <person name="Tuzun E."/>
            <person name="Birney E."/>
            <person name="Mongin E."/>
            <person name="Ureta-Vidal A."/>
            <person name="Woodwark C."/>
            <person name="Zdobnov E."/>
            <person name="Bork P."/>
            <person name="Suyama M."/>
            <person name="Torrents D."/>
            <person name="Alexandersson M."/>
            <person name="Trask B.J."/>
            <person name="Young J.M."/>
            <person name="Huang H."/>
            <person name="Wang H."/>
            <person name="Xing H."/>
            <person name="Daniels S."/>
            <person name="Gietzen D."/>
            <person name="Schmidt J."/>
            <person name="Stevens K."/>
            <person name="Vitt U."/>
            <person name="Wingrove J."/>
            <person name="Camara F."/>
            <person name="Mar Alba M."/>
            <person name="Abril J.F."/>
            <person name="Guigo R."/>
            <person name="Smit A."/>
            <person name="Dubchak I."/>
            <person name="Rubin E.M."/>
            <person name="Couronne O."/>
            <person name="Poliakov A."/>
            <person name="Huebner N."/>
            <person name="Ganten D."/>
            <person name="Goesele C."/>
            <person name="Hummel O."/>
            <person name="Kreitler T."/>
            <person name="Lee Y.-A."/>
            <person name="Monti J."/>
            <person name="Schulz H."/>
            <person name="Zimdahl H."/>
            <person name="Himmelbauer H."/>
            <person name="Lehrach H."/>
            <person name="Jacob H.J."/>
            <person name="Bromberg S."/>
            <person name="Gullings-Handley J."/>
            <person name="Jensen-Seaman M.I."/>
            <person name="Kwitek A.E."/>
            <person name="Lazar J."/>
            <person name="Pasko D."/>
            <person name="Tonellato P.J."/>
            <person name="Twigger S."/>
            <person name="Ponting C.P."/>
            <person name="Duarte J.M."/>
            <person name="Rice S."/>
            <person name="Goodstadt L."/>
            <person name="Beatson S.A."/>
            <person name="Emes R.D."/>
            <person name="Winter E.E."/>
            <person name="Webber C."/>
            <person name="Brandt P."/>
            <person name="Nyakatura G."/>
            <person name="Adetobi M."/>
            <person name="Chiaromonte F."/>
            <person name="Elnitski L."/>
            <person name="Eswara P."/>
            <person name="Hardison R.C."/>
            <person name="Hou M."/>
            <person name="Kolbe D."/>
            <person name="Makova K."/>
            <person name="Miller W."/>
            <person name="Nekrutenko A."/>
            <person name="Riemer C."/>
            <person name="Schwartz S."/>
            <person name="Taylor J."/>
            <person name="Yang S."/>
            <person name="Zhang Y."/>
            <person name="Lindpaintner K."/>
            <person name="Andrews T.D."/>
            <person name="Caccamo M."/>
            <person name="Clamp M."/>
            <person name="Clarke L."/>
            <person name="Curwen V."/>
            <person name="Durbin R.M."/>
            <person name="Eyras E."/>
            <person name="Searle S.M."/>
            <person name="Cooper G.M."/>
            <person name="Batzoglou S."/>
            <person name="Brudno M."/>
            <person name="Sidow A."/>
            <person name="Stone E.A."/>
            <person name="Payseur B.A."/>
            <person name="Bourque G."/>
            <person name="Lopez-Otin C."/>
            <person name="Puente X.S."/>
            <person name="Chakrabarti K."/>
            <person name="Chatterji S."/>
            <person name="Dewey C."/>
            <person name="Pachter L."/>
            <person name="Bray N."/>
            <person name="Yap V.B."/>
            <person name="Caspi A."/>
            <person name="Tesler G."/>
            <person name="Pevzner P.A."/>
            <person name="Haussler D."/>
            <person name="Roskin K.M."/>
            <person name="Baertsch R."/>
            <person name="Clawson H."/>
            <person name="Furey T.S."/>
            <person name="Hinrichs A.S."/>
            <person name="Karolchik D."/>
            <person name="Kent W.J."/>
            <person name="Rosenbloom K.R."/>
            <person name="Trumbower H."/>
            <person name="Weirauch M."/>
            <person name="Cooper D.N."/>
            <person name="Stenson P.D."/>
            <person name="Ma B."/>
            <person name="Brent M."/>
            <person name="Arumugam M."/>
            <person name="Shteynberg D."/>
            <person name="Copley R.R."/>
            <person name="Taylor M.S."/>
            <person name="Riethman H."/>
            <person name="Mudunuri U."/>
            <person name="Peterson J."/>
            <person name="Guyer M."/>
            <person name="Felsenfeld A."/>
            <person name="Old S."/>
            <person name="Mockrin S."/>
            <person name="Collins F.S."/>
        </authorList>
    </citation>
    <scope>NUCLEOTIDE SEQUENCE [LARGE SCALE GENOMIC DNA]</scope>
    <source>
        <strain>Brown Norway</strain>
    </source>
</reference>
<reference key="2">
    <citation type="submission" date="2005-07" db="EMBL/GenBank/DDBJ databases">
        <authorList>
            <person name="Mural R.J."/>
            <person name="Adams M.D."/>
            <person name="Myers E.W."/>
            <person name="Smith H.O."/>
            <person name="Venter J.C."/>
        </authorList>
    </citation>
    <scope>NUCLEOTIDE SEQUENCE [LARGE SCALE GENOMIC DNA]</scope>
    <source>
        <strain>Brown Norway</strain>
    </source>
</reference>
<reference key="3">
    <citation type="journal article" date="1996" name="J. Biol. Chem.">
        <title>Post-translational modification of human brain type I inositol-1,4,5-trisphosphate 5-phosphatase by farnesylation.</title>
        <authorList>
            <person name="De Smedt F."/>
            <person name="Boom A."/>
            <person name="Pesesse X."/>
            <person name="Schiffmann S.N."/>
            <person name="Erneux C."/>
        </authorList>
    </citation>
    <scope>FUNCTION</scope>
    <scope>CATALYTIC ACTIVITY</scope>
    <scope>SUBCELLULAR LOCATION</scope>
    <scope>TISSUE SPECIFICITY</scope>
</reference>
<feature type="chain" id="PRO_0000451146" description="Inositol polyphosphate-5-phosphatase A">
    <location>
        <begin position="1"/>
        <end position="409"/>
    </location>
</feature>
<feature type="propeptide" id="PRO_0000451147" description="Removed in mature form" evidence="1">
    <location>
        <begin position="410"/>
        <end position="412"/>
    </location>
</feature>
<feature type="lipid moiety-binding region" description="S-farnesyl cysteine" evidence="1">
    <location>
        <position position="409"/>
    </location>
</feature>
<dbReference type="EC" id="3.1.3.56" evidence="3"/>
<dbReference type="EMBL" id="AABR07005980">
    <property type="status" value="NOT_ANNOTATED_CDS"/>
    <property type="molecule type" value="Genomic_DNA"/>
</dbReference>
<dbReference type="EMBL" id="AABR07005981">
    <property type="status" value="NOT_ANNOTATED_CDS"/>
    <property type="molecule type" value="Genomic_DNA"/>
</dbReference>
<dbReference type="EMBL" id="AABR07005982">
    <property type="status" value="NOT_ANNOTATED_CDS"/>
    <property type="molecule type" value="Genomic_DNA"/>
</dbReference>
<dbReference type="EMBL" id="AABR07005983">
    <property type="status" value="NOT_ANNOTATED_CDS"/>
    <property type="molecule type" value="Genomic_DNA"/>
</dbReference>
<dbReference type="EMBL" id="CH473953">
    <property type="protein sequence ID" value="EDM11850.1"/>
    <property type="molecule type" value="Genomic_DNA"/>
</dbReference>
<dbReference type="RefSeq" id="NP_001102393.1">
    <property type="nucleotide sequence ID" value="NM_001108923.2"/>
</dbReference>
<dbReference type="FunCoup" id="D3ZZX1">
    <property type="interactions" value="1130"/>
</dbReference>
<dbReference type="STRING" id="10116.ENSRNOP00000051774"/>
<dbReference type="iPTMnet" id="D3ZZX1"/>
<dbReference type="PhosphoSitePlus" id="D3ZZX1"/>
<dbReference type="SwissPalm" id="D3ZZX1"/>
<dbReference type="PaxDb" id="10116-ENSRNOP00000051774"/>
<dbReference type="PeptideAtlas" id="D3ZZX1"/>
<dbReference type="Ensembl" id="ENSRNOT00000054890.5">
    <property type="protein sequence ID" value="ENSRNOP00000051774.2"/>
    <property type="gene ID" value="ENSRNOG00000017635.8"/>
</dbReference>
<dbReference type="GeneID" id="365382"/>
<dbReference type="KEGG" id="rno:365382"/>
<dbReference type="UCSC" id="RGD:1306168">
    <property type="organism name" value="rat"/>
</dbReference>
<dbReference type="AGR" id="RGD:1306168"/>
<dbReference type="CTD" id="3632"/>
<dbReference type="RGD" id="1306168">
    <property type="gene designation" value="Inpp5a"/>
</dbReference>
<dbReference type="eggNOG" id="KOG1976">
    <property type="taxonomic scope" value="Eukaryota"/>
</dbReference>
<dbReference type="GeneTree" id="ENSGT00390000015226"/>
<dbReference type="HOGENOM" id="CLU_057709_1_0_1"/>
<dbReference type="InParanoid" id="D3ZZX1"/>
<dbReference type="OMA" id="FGMETCT"/>
<dbReference type="PhylomeDB" id="D3ZZX1"/>
<dbReference type="TreeFam" id="TF314246"/>
<dbReference type="Reactome" id="R-RNO-1855183">
    <property type="pathway name" value="Synthesis of IP2, IP, and Ins in the cytosol"/>
</dbReference>
<dbReference type="PRO" id="PR:D3ZZX1"/>
<dbReference type="Proteomes" id="UP000002494">
    <property type="component" value="Chromosome 1"/>
</dbReference>
<dbReference type="Proteomes" id="UP000234681">
    <property type="component" value="Chromosome 1"/>
</dbReference>
<dbReference type="Bgee" id="ENSRNOG00000017635">
    <property type="expression patterns" value="Expressed in heart and 20 other cell types or tissues"/>
</dbReference>
<dbReference type="GO" id="GO:0030425">
    <property type="term" value="C:dendrite"/>
    <property type="evidence" value="ECO:0000314"/>
    <property type="project" value="UniProtKB"/>
</dbReference>
<dbReference type="GO" id="GO:0016020">
    <property type="term" value="C:membrane"/>
    <property type="evidence" value="ECO:0000266"/>
    <property type="project" value="RGD"/>
</dbReference>
<dbReference type="GO" id="GO:0005886">
    <property type="term" value="C:plasma membrane"/>
    <property type="evidence" value="ECO:0000250"/>
    <property type="project" value="UniProtKB"/>
</dbReference>
<dbReference type="GO" id="GO:0004445">
    <property type="term" value="F:inositol-polyphosphate 5-phosphatase activity"/>
    <property type="evidence" value="ECO:0000314"/>
    <property type="project" value="UniProtKB"/>
</dbReference>
<dbReference type="GO" id="GO:0042731">
    <property type="term" value="F:PH domain binding"/>
    <property type="evidence" value="ECO:0000266"/>
    <property type="project" value="RGD"/>
</dbReference>
<dbReference type="GO" id="GO:1900737">
    <property type="term" value="P:negative regulation of phospholipase C-activating G protein-coupled receptor signaling pathway"/>
    <property type="evidence" value="ECO:0000250"/>
    <property type="project" value="UniProtKB"/>
</dbReference>
<dbReference type="GO" id="GO:0046856">
    <property type="term" value="P:phosphatidylinositol dephosphorylation"/>
    <property type="evidence" value="ECO:0007669"/>
    <property type="project" value="InterPro"/>
</dbReference>
<dbReference type="CDD" id="cd09092">
    <property type="entry name" value="INPP5A"/>
    <property type="match status" value="1"/>
</dbReference>
<dbReference type="Gene3D" id="3.60.10.10">
    <property type="entry name" value="Endonuclease/exonuclease/phosphatase"/>
    <property type="match status" value="1"/>
</dbReference>
<dbReference type="InterPro" id="IPR036691">
    <property type="entry name" value="Endo/exonu/phosph_ase_sf"/>
</dbReference>
<dbReference type="InterPro" id="IPR039737">
    <property type="entry name" value="INPP5A"/>
</dbReference>
<dbReference type="InterPro" id="IPR000300">
    <property type="entry name" value="IPPc"/>
</dbReference>
<dbReference type="PANTHER" id="PTHR12997:SF2">
    <property type="entry name" value="INOSITOL POLYPHOSPHATE-5-PHOSPHATASE A"/>
    <property type="match status" value="1"/>
</dbReference>
<dbReference type="PANTHER" id="PTHR12997">
    <property type="entry name" value="TYPE I INOSITOL-1,4,5-TRISPHOSPHATE 5-PHOSPHATASE"/>
    <property type="match status" value="1"/>
</dbReference>
<dbReference type="Pfam" id="PF22669">
    <property type="entry name" value="Exo_endo_phos2"/>
    <property type="match status" value="1"/>
</dbReference>
<dbReference type="SMART" id="SM00128">
    <property type="entry name" value="IPPc"/>
    <property type="match status" value="1"/>
</dbReference>
<dbReference type="SUPFAM" id="SSF56219">
    <property type="entry name" value="DNase I-like"/>
    <property type="match status" value="1"/>
</dbReference>
<sequence>MAGKAAAPGTAVLLVTANVGSLFDDPENLQKNWLREFYQVLHTHKPHFMALHCQEFGGKNYEASMSHVDKFVKELLSSDAMKEYNRARVYLDENYKSQEHFTALGSFYFLHESLKNIYQFDFKAKKYKKVTGKEIYSDTLESTPMLEKEKFPQDYFPECKWSRKGFIRTRWCIADCAFDLVNIHLFHDASNLVAWETSPSVYSGVRHKALGYVLDRIIDQRFEKVSYFVFGDFNFRLDSKSVVETLCTKATMQTVRAADTNEVVKLIFRESDNDRKVVLQLEKKLFDYFNQDVFRDNNGTALLEFDKELSVFKDRLYELDISFPPSYPYSEDSSQGEQYMNTRCPAWCDRILMSLSAKELVLKSESEEKVATYDHIGPNVCMGDHKPVFLAFRIAPGAGKPHAHVHKCCVVQ</sequence>
<keyword id="KW-1003">Cell membrane</keyword>
<keyword id="KW-0966">Cell projection</keyword>
<keyword id="KW-0378">Hydrolase</keyword>
<keyword id="KW-0449">Lipoprotein</keyword>
<keyword id="KW-0472">Membrane</keyword>
<keyword id="KW-0636">Prenylation</keyword>
<keyword id="KW-1185">Reference proteome</keyword>
<proteinExistence type="evidence at protein level"/>
<name>I5P1_RAT</name>
<gene>
    <name type="primary">Inpp5a</name>
</gene>
<organism>
    <name type="scientific">Rattus norvegicus</name>
    <name type="common">Rat</name>
    <dbReference type="NCBI Taxonomy" id="10116"/>
    <lineage>
        <taxon>Eukaryota</taxon>
        <taxon>Metazoa</taxon>
        <taxon>Chordata</taxon>
        <taxon>Craniata</taxon>
        <taxon>Vertebrata</taxon>
        <taxon>Euteleostomi</taxon>
        <taxon>Mammalia</taxon>
        <taxon>Eutheria</taxon>
        <taxon>Euarchontoglires</taxon>
        <taxon>Glires</taxon>
        <taxon>Rodentia</taxon>
        <taxon>Myomorpha</taxon>
        <taxon>Muroidea</taxon>
        <taxon>Muridae</taxon>
        <taxon>Murinae</taxon>
        <taxon>Rattus</taxon>
    </lineage>
</organism>
<protein>
    <recommendedName>
        <fullName>Inositol polyphosphate-5-phosphatase A</fullName>
        <ecNumber evidence="3">3.1.3.56</ecNumber>
    </recommendedName>
    <alternativeName>
        <fullName>Type I inositol 1,4,5-trisphosphate 5-phosphatase</fullName>
        <shortName>5PTase</shortName>
    </alternativeName>
</protein>
<evidence type="ECO:0000250" key="1">
    <source>
        <dbReference type="UniProtKB" id="Q14642"/>
    </source>
</evidence>
<evidence type="ECO:0000250" key="2">
    <source>
        <dbReference type="UniProtKB" id="Q7TNC9"/>
    </source>
</evidence>
<evidence type="ECO:0000269" key="3">
    <source>
    </source>
</evidence>
<evidence type="ECO:0000305" key="4"/>
<evidence type="ECO:0000305" key="5">
    <source>
    </source>
</evidence>
<comment type="function">
    <text evidence="2 3">Phosphatase that specifically hydrolyzes the 5-phosphate of inositol 1,4,5-trisphosphate to inositol 1,4-bisphosphate, and inositol 1,3,4,5-tetrasphosphate to inositol 1,3,4-trisphosphate (PubMed:8626616). Plays a crucial role in the survival of cerebellar Purkinje cells (By similarity).</text>
</comment>
<comment type="catalytic activity">
    <reaction evidence="3">
        <text>1D-myo-inositol 1,4,5-trisphosphate + H2O = 1D-myo-inositol 1,4-bisphosphate + phosphate</text>
        <dbReference type="Rhea" id="RHEA:19797"/>
        <dbReference type="ChEBI" id="CHEBI:15377"/>
        <dbReference type="ChEBI" id="CHEBI:43474"/>
        <dbReference type="ChEBI" id="CHEBI:58282"/>
        <dbReference type="ChEBI" id="CHEBI:203600"/>
        <dbReference type="EC" id="3.1.3.56"/>
    </reaction>
    <physiologicalReaction direction="left-to-right" evidence="5">
        <dbReference type="Rhea" id="RHEA:19798"/>
    </physiologicalReaction>
</comment>
<comment type="catalytic activity">
    <reaction evidence="3">
        <text>1D-myo-inositol 1,3,4,5-tetrakisphosphate + H2O = 1D-myo-inositol 1,3,4-trisphosphate + phosphate</text>
        <dbReference type="Rhea" id="RHEA:11392"/>
        <dbReference type="ChEBI" id="CHEBI:15377"/>
        <dbReference type="ChEBI" id="CHEBI:43474"/>
        <dbReference type="ChEBI" id="CHEBI:57895"/>
        <dbReference type="ChEBI" id="CHEBI:58414"/>
        <dbReference type="EC" id="3.1.3.56"/>
    </reaction>
    <physiologicalReaction direction="left-to-right" evidence="5">
        <dbReference type="Rhea" id="RHEA:11393"/>
    </physiologicalReaction>
</comment>
<comment type="subunit">
    <text evidence="2">Interacts with TASOR.</text>
</comment>
<comment type="subcellular location">
    <subcellularLocation>
        <location evidence="1">Cell membrane</location>
        <topology evidence="1">Lipid-anchor</topology>
    </subcellularLocation>
    <subcellularLocation>
        <location evidence="3">Cell projection</location>
        <location evidence="3">Dendrite</location>
    </subcellularLocation>
</comment>
<comment type="tissue specificity">
    <text evidence="3">Expressed in cerebellar Purkinje cells (at protein level).</text>
</comment>
<comment type="PTM">
    <text evidence="1">Isoprenylation at Cys-409 is required for localization at the membrane.</text>
</comment>
<comment type="similarity">
    <text evidence="4">Belongs to the inositol 1,4,5-trisphosphate 5-phosphatase type I family.</text>
</comment>
<accession>D3ZZX1</accession>